<reference key="1">
    <citation type="journal article" date="1998" name="Science">
        <title>Genome sequence of the nematode C. elegans: a platform for investigating biology.</title>
        <authorList>
            <consortium name="The C. elegans sequencing consortium"/>
        </authorList>
    </citation>
    <scope>NUCLEOTIDE SEQUENCE [LARGE SCALE GENOMIC DNA]</scope>
    <source>
        <strain>Bristol N2</strain>
    </source>
</reference>
<accession>Q23655</accession>
<organism>
    <name type="scientific">Caenorhabditis elegans</name>
    <dbReference type="NCBI Taxonomy" id="6239"/>
    <lineage>
        <taxon>Eukaryota</taxon>
        <taxon>Metazoa</taxon>
        <taxon>Ecdysozoa</taxon>
        <taxon>Nematoda</taxon>
        <taxon>Chromadorea</taxon>
        <taxon>Rhabditida</taxon>
        <taxon>Rhabditina</taxon>
        <taxon>Rhabditomorpha</taxon>
        <taxon>Rhabditoidea</taxon>
        <taxon>Rhabditidae</taxon>
        <taxon>Peloderinae</taxon>
        <taxon>Caenorhabditis</taxon>
    </lineage>
</organism>
<evidence type="ECO:0000250" key="1">
    <source>
        <dbReference type="UniProtKB" id="P22307"/>
    </source>
</evidence>
<sequence length="118" mass="13128">MAFKSDVIFEEIKERIATDKEMVKKVGTSFRMTIAGADGKTKVWTIDAKSDTPYVGDDSSRPVEIEINIKDSDFIAIAAGKMKPDQAFMQGKMKLKGNIAKAMKLRTILDPKMLKAKL</sequence>
<protein>
    <recommendedName>
        <fullName evidence="1">Non-specific lipid-transfer protein-like 1</fullName>
        <shortName evidence="1">NSL-TP1</shortName>
    </recommendedName>
</protein>
<dbReference type="EMBL" id="Z48638">
    <property type="protein sequence ID" value="CAA88566.1"/>
    <property type="molecule type" value="Genomic_DNA"/>
</dbReference>
<dbReference type="PIR" id="T28068">
    <property type="entry name" value="T28068"/>
</dbReference>
<dbReference type="RefSeq" id="NP_496161.1">
    <property type="nucleotide sequence ID" value="NM_063760.6"/>
</dbReference>
<dbReference type="SMR" id="Q23655"/>
<dbReference type="FunCoup" id="Q23655">
    <property type="interactions" value="184"/>
</dbReference>
<dbReference type="STRING" id="6239.ZK892.2.1"/>
<dbReference type="PaxDb" id="6239-ZK892.2"/>
<dbReference type="PeptideAtlas" id="Q23655"/>
<dbReference type="EnsemblMetazoa" id="ZK892.2.1">
    <property type="protein sequence ID" value="ZK892.2.1"/>
    <property type="gene ID" value="WBGene00003773"/>
</dbReference>
<dbReference type="GeneID" id="191734"/>
<dbReference type="KEGG" id="cel:CELE_ZK892.2"/>
<dbReference type="UCSC" id="ZK892.2">
    <property type="organism name" value="c. elegans"/>
</dbReference>
<dbReference type="AGR" id="WB:WBGene00003773"/>
<dbReference type="CTD" id="191734"/>
<dbReference type="WormBase" id="ZK892.2">
    <property type="protein sequence ID" value="CE01725"/>
    <property type="gene ID" value="WBGene00003773"/>
    <property type="gene designation" value="nlt-1"/>
</dbReference>
<dbReference type="eggNOG" id="KOG4170">
    <property type="taxonomic scope" value="Eukaryota"/>
</dbReference>
<dbReference type="GeneTree" id="ENSGT00940000170794"/>
<dbReference type="HOGENOM" id="CLU_105945_3_1_1"/>
<dbReference type="InParanoid" id="Q23655"/>
<dbReference type="OMA" id="WTIDMKK"/>
<dbReference type="OrthoDB" id="3592703at2759"/>
<dbReference type="PhylomeDB" id="Q23655"/>
<dbReference type="PRO" id="PR:Q23655"/>
<dbReference type="Proteomes" id="UP000001940">
    <property type="component" value="Chromosome II"/>
</dbReference>
<dbReference type="Bgee" id="WBGene00003773">
    <property type="expression patterns" value="Expressed in larva and 4 other cell types or tissues"/>
</dbReference>
<dbReference type="GO" id="GO:0005829">
    <property type="term" value="C:cytosol"/>
    <property type="evidence" value="ECO:0000318"/>
    <property type="project" value="GO_Central"/>
</dbReference>
<dbReference type="GO" id="GO:0008289">
    <property type="term" value="F:lipid binding"/>
    <property type="evidence" value="ECO:0007669"/>
    <property type="project" value="UniProtKB-KW"/>
</dbReference>
<dbReference type="FunFam" id="3.30.1050.10:FF:000015">
    <property type="entry name" value="Non-specific lipid-transfer protein-like 1"/>
    <property type="match status" value="1"/>
</dbReference>
<dbReference type="Gene3D" id="3.30.1050.10">
    <property type="entry name" value="SCP2 sterol-binding domain"/>
    <property type="match status" value="1"/>
</dbReference>
<dbReference type="InterPro" id="IPR003033">
    <property type="entry name" value="SCP2_sterol-bd_dom"/>
</dbReference>
<dbReference type="InterPro" id="IPR036527">
    <property type="entry name" value="SCP2_sterol-bd_dom_sf"/>
</dbReference>
<dbReference type="PANTHER" id="PTHR10094:SF25">
    <property type="entry name" value="SCP2 STEROL-BINDING DOMAIN-CONTAINING PROTEIN 1"/>
    <property type="match status" value="1"/>
</dbReference>
<dbReference type="PANTHER" id="PTHR10094">
    <property type="entry name" value="STEROL CARRIER PROTEIN 2 SCP-2 FAMILY PROTEIN"/>
    <property type="match status" value="1"/>
</dbReference>
<dbReference type="Pfam" id="PF02036">
    <property type="entry name" value="SCP2"/>
    <property type="match status" value="1"/>
</dbReference>
<dbReference type="SUPFAM" id="SSF55718">
    <property type="entry name" value="SCP-like"/>
    <property type="match status" value="1"/>
</dbReference>
<gene>
    <name type="primary">nlt-1</name>
    <name type="ORF">ZK892.2</name>
</gene>
<name>NLTP1_CAEEL</name>
<keyword id="KW-0446">Lipid-binding</keyword>
<keyword id="KW-1185">Reference proteome</keyword>
<keyword id="KW-0813">Transport</keyword>
<feature type="chain" id="PRO_0000206465" description="Non-specific lipid-transfer protein-like 1">
    <location>
        <begin position="1"/>
        <end position="118"/>
    </location>
</feature>
<feature type="domain" description="SCP2">
    <location>
        <begin position="5"/>
        <end position="113"/>
    </location>
</feature>
<proteinExistence type="predicted"/>